<gene>
    <name evidence="2" type="primary">fda</name>
    <name type="ordered locus">SH0450</name>
</gene>
<accession>Q4L9B6</accession>
<feature type="initiator methionine" description="Removed" evidence="1">
    <location>
        <position position="1"/>
    </location>
</feature>
<feature type="chain" id="PRO_0000216912" description="Fructose-bisphosphate aldolase class 1">
    <location>
        <begin position="2"/>
        <end position="296"/>
    </location>
</feature>
<feature type="active site" description="Proton acceptor" evidence="2">
    <location>
        <position position="175"/>
    </location>
</feature>
<feature type="active site" description="Schiff-base intermediate with dihydroxyacetone-P" evidence="2">
    <location>
        <position position="212"/>
    </location>
</feature>
<sequence length="296" mass="32968">MNKEQLEKMTNGKGFIAALDQSGGSTPKALKEYGVNEDEYSNDDEMFQLVHDMRTRVVTSPSFSPDKILGAILFEQTMDREVEGKYTGDYLADKGVVPFLKVDKGLAEQQNGVQLMKPIDDLDDTLDRAVERHIFGTKMRSNILELNEQGIKDVVEQQFEFAKKIIAKGLVPIIEPEVNINAKDKAEIEEVLKAELKKGLDALNDDQLVMLKLTIPTKANLYKELADHPNVVRVVVLSGGYSRDEANKLLKDNDELIASFSRALASDLRASQSQEEFDKALGDAVDSIYDASVNKN</sequence>
<comment type="catalytic activity">
    <reaction evidence="2">
        <text>beta-D-fructose 1,6-bisphosphate = D-glyceraldehyde 3-phosphate + dihydroxyacetone phosphate</text>
        <dbReference type="Rhea" id="RHEA:14729"/>
        <dbReference type="ChEBI" id="CHEBI:32966"/>
        <dbReference type="ChEBI" id="CHEBI:57642"/>
        <dbReference type="ChEBI" id="CHEBI:59776"/>
        <dbReference type="EC" id="4.1.2.13"/>
    </reaction>
</comment>
<comment type="pathway">
    <text evidence="2">Carbohydrate degradation; glycolysis; D-glyceraldehyde 3-phosphate and glycerone phosphate from D-glucose: step 4/4.</text>
</comment>
<comment type="similarity">
    <text evidence="2">Belongs to the class I fructose-bisphosphate aldolase family.</text>
</comment>
<proteinExistence type="inferred from homology"/>
<evidence type="ECO:0000250" key="1"/>
<evidence type="ECO:0000255" key="2">
    <source>
        <dbReference type="HAMAP-Rule" id="MF_00729"/>
    </source>
</evidence>
<protein>
    <recommendedName>
        <fullName evidence="2">Fructose-bisphosphate aldolase class 1</fullName>
        <ecNumber evidence="2">4.1.2.13</ecNumber>
    </recommendedName>
    <alternativeName>
        <fullName>Fructose-bisphosphate aldolase class I</fullName>
        <shortName evidence="2">FBP aldolase</shortName>
    </alternativeName>
</protein>
<keyword id="KW-0324">Glycolysis</keyword>
<keyword id="KW-0456">Lyase</keyword>
<keyword id="KW-0704">Schiff base</keyword>
<dbReference type="EC" id="4.1.2.13" evidence="2"/>
<dbReference type="EMBL" id="AP006716">
    <property type="protein sequence ID" value="BAE03759.1"/>
    <property type="molecule type" value="Genomic_DNA"/>
</dbReference>
<dbReference type="RefSeq" id="WP_011274776.1">
    <property type="nucleotide sequence ID" value="NC_007168.1"/>
</dbReference>
<dbReference type="SMR" id="Q4L9B6"/>
<dbReference type="KEGG" id="sha:SH0450"/>
<dbReference type="eggNOG" id="COG3588">
    <property type="taxonomic scope" value="Bacteria"/>
</dbReference>
<dbReference type="HOGENOM" id="CLU_081560_0_0_9"/>
<dbReference type="OrthoDB" id="9813469at2"/>
<dbReference type="UniPathway" id="UPA00109">
    <property type="reaction ID" value="UER00183"/>
</dbReference>
<dbReference type="Proteomes" id="UP000000543">
    <property type="component" value="Chromosome"/>
</dbReference>
<dbReference type="GO" id="GO:0004332">
    <property type="term" value="F:fructose-bisphosphate aldolase activity"/>
    <property type="evidence" value="ECO:0007669"/>
    <property type="project" value="UniProtKB-UniRule"/>
</dbReference>
<dbReference type="GO" id="GO:0006096">
    <property type="term" value="P:glycolytic process"/>
    <property type="evidence" value="ECO:0007669"/>
    <property type="project" value="UniProtKB-UniRule"/>
</dbReference>
<dbReference type="Gene3D" id="3.20.20.70">
    <property type="entry name" value="Aldolase class I"/>
    <property type="match status" value="1"/>
</dbReference>
<dbReference type="HAMAP" id="MF_00729">
    <property type="entry name" value="FBP_aldolase_1"/>
    <property type="match status" value="1"/>
</dbReference>
<dbReference type="InterPro" id="IPR013785">
    <property type="entry name" value="Aldolase_TIM"/>
</dbReference>
<dbReference type="InterPro" id="IPR000741">
    <property type="entry name" value="FBA_I"/>
</dbReference>
<dbReference type="InterPro" id="IPR023014">
    <property type="entry name" value="FBA_I_Gram+-type"/>
</dbReference>
<dbReference type="NCBIfam" id="NF003784">
    <property type="entry name" value="PRK05377.1"/>
    <property type="match status" value="1"/>
</dbReference>
<dbReference type="PANTHER" id="PTHR11627">
    <property type="entry name" value="FRUCTOSE-BISPHOSPHATE ALDOLASE"/>
    <property type="match status" value="1"/>
</dbReference>
<dbReference type="Pfam" id="PF00274">
    <property type="entry name" value="Glycolytic"/>
    <property type="match status" value="1"/>
</dbReference>
<dbReference type="SUPFAM" id="SSF51569">
    <property type="entry name" value="Aldolase"/>
    <property type="match status" value="1"/>
</dbReference>
<name>ALF1_STAHJ</name>
<reference key="1">
    <citation type="journal article" date="2005" name="J. Bacteriol.">
        <title>Whole-genome sequencing of Staphylococcus haemolyticus uncovers the extreme plasticity of its genome and the evolution of human-colonizing staphylococcal species.</title>
        <authorList>
            <person name="Takeuchi F."/>
            <person name="Watanabe S."/>
            <person name="Baba T."/>
            <person name="Yuzawa H."/>
            <person name="Ito T."/>
            <person name="Morimoto Y."/>
            <person name="Kuroda M."/>
            <person name="Cui L."/>
            <person name="Takahashi M."/>
            <person name="Ankai A."/>
            <person name="Baba S."/>
            <person name="Fukui S."/>
            <person name="Lee J.C."/>
            <person name="Hiramatsu K."/>
        </authorList>
    </citation>
    <scope>NUCLEOTIDE SEQUENCE [LARGE SCALE GENOMIC DNA]</scope>
    <source>
        <strain>JCSC1435</strain>
    </source>
</reference>
<organism>
    <name type="scientific">Staphylococcus haemolyticus (strain JCSC1435)</name>
    <dbReference type="NCBI Taxonomy" id="279808"/>
    <lineage>
        <taxon>Bacteria</taxon>
        <taxon>Bacillati</taxon>
        <taxon>Bacillota</taxon>
        <taxon>Bacilli</taxon>
        <taxon>Bacillales</taxon>
        <taxon>Staphylococcaceae</taxon>
        <taxon>Staphylococcus</taxon>
    </lineage>
</organism>